<feature type="chain" id="PRO_0000092420" description="Lipoprotein-releasing system ATP-binding protein LolD">
    <location>
        <begin position="1"/>
        <end position="231"/>
    </location>
</feature>
<feature type="domain" description="ABC transporter" evidence="1">
    <location>
        <begin position="11"/>
        <end position="231"/>
    </location>
</feature>
<feature type="binding site" evidence="1">
    <location>
        <begin position="47"/>
        <end position="54"/>
    </location>
    <ligand>
        <name>ATP</name>
        <dbReference type="ChEBI" id="CHEBI:30616"/>
    </ligand>
</feature>
<evidence type="ECO:0000255" key="1">
    <source>
        <dbReference type="HAMAP-Rule" id="MF_01708"/>
    </source>
</evidence>
<name>LOLD_BORPA</name>
<keyword id="KW-0067">ATP-binding</keyword>
<keyword id="KW-0997">Cell inner membrane</keyword>
<keyword id="KW-1003">Cell membrane</keyword>
<keyword id="KW-0472">Membrane</keyword>
<keyword id="KW-0547">Nucleotide-binding</keyword>
<keyword id="KW-1278">Translocase</keyword>
<keyword id="KW-0813">Transport</keyword>
<accession>Q7W8T0</accession>
<comment type="function">
    <text evidence="1">Part of the ABC transporter complex LolCDE involved in the translocation of mature outer membrane-directed lipoproteins, from the inner membrane to the periplasmic chaperone, LolA. Responsible for the formation of the LolA-lipoprotein complex in an ATP-dependent manner.</text>
</comment>
<comment type="subunit">
    <text evidence="1">The complex is composed of two ATP-binding proteins (LolD) and two transmembrane proteins (LolC and LolE).</text>
</comment>
<comment type="subcellular location">
    <subcellularLocation>
        <location evidence="1">Cell inner membrane</location>
        <topology evidence="1">Peripheral membrane protein</topology>
    </subcellularLocation>
</comment>
<comment type="similarity">
    <text evidence="1">Belongs to the ABC transporter superfamily. Lipoprotein translocase (TC 3.A.1.125) family.</text>
</comment>
<reference key="1">
    <citation type="journal article" date="2003" name="Nat. Genet.">
        <title>Comparative analysis of the genome sequences of Bordetella pertussis, Bordetella parapertussis and Bordetella bronchiseptica.</title>
        <authorList>
            <person name="Parkhill J."/>
            <person name="Sebaihia M."/>
            <person name="Preston A."/>
            <person name="Murphy L.D."/>
            <person name="Thomson N.R."/>
            <person name="Harris D.E."/>
            <person name="Holden M.T.G."/>
            <person name="Churcher C.M."/>
            <person name="Bentley S.D."/>
            <person name="Mungall K.L."/>
            <person name="Cerdeno-Tarraga A.-M."/>
            <person name="Temple L."/>
            <person name="James K.D."/>
            <person name="Harris B."/>
            <person name="Quail M.A."/>
            <person name="Achtman M."/>
            <person name="Atkin R."/>
            <person name="Baker S."/>
            <person name="Basham D."/>
            <person name="Bason N."/>
            <person name="Cherevach I."/>
            <person name="Chillingworth T."/>
            <person name="Collins M."/>
            <person name="Cronin A."/>
            <person name="Davis P."/>
            <person name="Doggett J."/>
            <person name="Feltwell T."/>
            <person name="Goble A."/>
            <person name="Hamlin N."/>
            <person name="Hauser H."/>
            <person name="Holroyd S."/>
            <person name="Jagels K."/>
            <person name="Leather S."/>
            <person name="Moule S."/>
            <person name="Norberczak H."/>
            <person name="O'Neil S."/>
            <person name="Ormond D."/>
            <person name="Price C."/>
            <person name="Rabbinowitsch E."/>
            <person name="Rutter S."/>
            <person name="Sanders M."/>
            <person name="Saunders D."/>
            <person name="Seeger K."/>
            <person name="Sharp S."/>
            <person name="Simmonds M."/>
            <person name="Skelton J."/>
            <person name="Squares R."/>
            <person name="Squares S."/>
            <person name="Stevens K."/>
            <person name="Unwin L."/>
            <person name="Whitehead S."/>
            <person name="Barrell B.G."/>
            <person name="Maskell D.J."/>
        </authorList>
    </citation>
    <scope>NUCLEOTIDE SEQUENCE [LARGE SCALE GENOMIC DNA]</scope>
    <source>
        <strain>12822 / ATCC BAA-587 / NCTC 13253</strain>
    </source>
</reference>
<protein>
    <recommendedName>
        <fullName evidence="1">Lipoprotein-releasing system ATP-binding protein LolD</fullName>
        <ecNumber evidence="1">7.6.2.-</ecNumber>
    </recommendedName>
</protein>
<proteinExistence type="inferred from homology"/>
<sequence length="231" mass="25028">MTEPNDTGPALQAEHLGKVYDEGPARIEVLSDVSLSVARGEMVAIVGASGSGKSTLLHILGLLDVPSSGTVSVDGVPAAGLSEKRKSALRNRSLGFVYQFHHLLPEFSALDNVAMPLIVRRENRDRARAQAREVLELVGLAAREEHFPGQLSGGERQRVALARALVTRPACVLADEPTGNLDRHTAHNMFELLTRVNRESGTAFVIVTHDPELAARADRQLHMENGRLQPD</sequence>
<gene>
    <name evidence="1" type="primary">lolD</name>
    <name type="ordered locus">BPP2051</name>
</gene>
<organism>
    <name type="scientific">Bordetella parapertussis (strain 12822 / ATCC BAA-587 / NCTC 13253)</name>
    <dbReference type="NCBI Taxonomy" id="257311"/>
    <lineage>
        <taxon>Bacteria</taxon>
        <taxon>Pseudomonadati</taxon>
        <taxon>Pseudomonadota</taxon>
        <taxon>Betaproteobacteria</taxon>
        <taxon>Burkholderiales</taxon>
        <taxon>Alcaligenaceae</taxon>
        <taxon>Bordetella</taxon>
    </lineage>
</organism>
<dbReference type="EC" id="7.6.2.-" evidence="1"/>
<dbReference type="EMBL" id="BX640429">
    <property type="protein sequence ID" value="CAE37351.1"/>
    <property type="molecule type" value="Genomic_DNA"/>
</dbReference>
<dbReference type="RefSeq" id="WP_003812422.1">
    <property type="nucleotide sequence ID" value="NC_002928.3"/>
</dbReference>
<dbReference type="SMR" id="Q7W8T0"/>
<dbReference type="GeneID" id="93203825"/>
<dbReference type="KEGG" id="bpa:BPP2051"/>
<dbReference type="HOGENOM" id="CLU_000604_1_22_4"/>
<dbReference type="Proteomes" id="UP000001421">
    <property type="component" value="Chromosome"/>
</dbReference>
<dbReference type="GO" id="GO:0005886">
    <property type="term" value="C:plasma membrane"/>
    <property type="evidence" value="ECO:0007669"/>
    <property type="project" value="UniProtKB-SubCell"/>
</dbReference>
<dbReference type="GO" id="GO:0005524">
    <property type="term" value="F:ATP binding"/>
    <property type="evidence" value="ECO:0007669"/>
    <property type="project" value="UniProtKB-KW"/>
</dbReference>
<dbReference type="GO" id="GO:0016887">
    <property type="term" value="F:ATP hydrolysis activity"/>
    <property type="evidence" value="ECO:0007669"/>
    <property type="project" value="InterPro"/>
</dbReference>
<dbReference type="GO" id="GO:0022857">
    <property type="term" value="F:transmembrane transporter activity"/>
    <property type="evidence" value="ECO:0007669"/>
    <property type="project" value="TreeGrafter"/>
</dbReference>
<dbReference type="GO" id="GO:0044874">
    <property type="term" value="P:lipoprotein localization to outer membrane"/>
    <property type="evidence" value="ECO:0007669"/>
    <property type="project" value="TreeGrafter"/>
</dbReference>
<dbReference type="GO" id="GO:0089705">
    <property type="term" value="P:protein localization to outer membrane"/>
    <property type="evidence" value="ECO:0007669"/>
    <property type="project" value="TreeGrafter"/>
</dbReference>
<dbReference type="CDD" id="cd03255">
    <property type="entry name" value="ABC_MJ0796_LolCDE_FtsE"/>
    <property type="match status" value="1"/>
</dbReference>
<dbReference type="FunFam" id="3.40.50.300:FF:000230">
    <property type="entry name" value="Lipoprotein-releasing system ATP-binding protein LolD"/>
    <property type="match status" value="1"/>
</dbReference>
<dbReference type="Gene3D" id="3.40.50.300">
    <property type="entry name" value="P-loop containing nucleotide triphosphate hydrolases"/>
    <property type="match status" value="1"/>
</dbReference>
<dbReference type="InterPro" id="IPR003593">
    <property type="entry name" value="AAA+_ATPase"/>
</dbReference>
<dbReference type="InterPro" id="IPR003439">
    <property type="entry name" value="ABC_transporter-like_ATP-bd"/>
</dbReference>
<dbReference type="InterPro" id="IPR017871">
    <property type="entry name" value="ABC_transporter-like_CS"/>
</dbReference>
<dbReference type="InterPro" id="IPR015854">
    <property type="entry name" value="ABC_transpr_LolD-like"/>
</dbReference>
<dbReference type="InterPro" id="IPR011924">
    <property type="entry name" value="LolD_lipo_ATP-bd"/>
</dbReference>
<dbReference type="InterPro" id="IPR017911">
    <property type="entry name" value="MacB-like_ATP-bd"/>
</dbReference>
<dbReference type="InterPro" id="IPR027417">
    <property type="entry name" value="P-loop_NTPase"/>
</dbReference>
<dbReference type="NCBIfam" id="TIGR02211">
    <property type="entry name" value="LolD_lipo_ex"/>
    <property type="match status" value="1"/>
</dbReference>
<dbReference type="PANTHER" id="PTHR24220">
    <property type="entry name" value="IMPORT ATP-BINDING PROTEIN"/>
    <property type="match status" value="1"/>
</dbReference>
<dbReference type="PANTHER" id="PTHR24220:SF689">
    <property type="entry name" value="LIPOPROTEIN-RELEASING SYSTEM ATP-BINDING PROTEIN LOLD"/>
    <property type="match status" value="1"/>
</dbReference>
<dbReference type="Pfam" id="PF00005">
    <property type="entry name" value="ABC_tran"/>
    <property type="match status" value="1"/>
</dbReference>
<dbReference type="SMART" id="SM00382">
    <property type="entry name" value="AAA"/>
    <property type="match status" value="1"/>
</dbReference>
<dbReference type="SUPFAM" id="SSF52540">
    <property type="entry name" value="P-loop containing nucleoside triphosphate hydrolases"/>
    <property type="match status" value="1"/>
</dbReference>
<dbReference type="PROSITE" id="PS00211">
    <property type="entry name" value="ABC_TRANSPORTER_1"/>
    <property type="match status" value="1"/>
</dbReference>
<dbReference type="PROSITE" id="PS50893">
    <property type="entry name" value="ABC_TRANSPORTER_2"/>
    <property type="match status" value="1"/>
</dbReference>
<dbReference type="PROSITE" id="PS51244">
    <property type="entry name" value="LOLD"/>
    <property type="match status" value="1"/>
</dbReference>